<protein>
    <recommendedName>
        <fullName evidence="1">Dihydroorotase</fullName>
        <shortName evidence="1">DHOase</shortName>
        <ecNumber evidence="1">3.5.2.3</ecNumber>
    </recommendedName>
</protein>
<keyword id="KW-0378">Hydrolase</keyword>
<keyword id="KW-0479">Metal-binding</keyword>
<keyword id="KW-0665">Pyrimidine biosynthesis</keyword>
<keyword id="KW-1185">Reference proteome</keyword>
<keyword id="KW-0862">Zinc</keyword>
<sequence>MTHLTLTRPDDWHIHLRDGDSLADTVRDAGRYMGRAIVMPNLVPPVTTTEAAIAYYERIKAHSSTAFEPLMVLYLTDKTSPDEIRAAKASGKVVAAKLYPAGATTNSDSGVTDVNNIYGVLKAMEEEGLLLLVHGEVTDSAIDIFDRERIFIENILSKVVADFPGLKIVLEHITTKDAVDFVMSAGDNVAATITAHHLLYNRNHMLAGGIRPHFYCLPILKRNTHQQALLAAATSGSKKFFLGTDSAPHAKDKKEAACGCAGSYTAHAALELYAEAFEAEGALDKLEAFASFNGPDFYGLPRNADTVALVKSPWQVPESYPLGSTTVVPIRAGEIIGWKVED</sequence>
<feature type="chain" id="PRO_1000024050" description="Dihydroorotase">
    <location>
        <begin position="1"/>
        <end position="342"/>
    </location>
</feature>
<feature type="active site" evidence="1">
    <location>
        <position position="245"/>
    </location>
</feature>
<feature type="binding site" evidence="1">
    <location>
        <position position="13"/>
    </location>
    <ligand>
        <name>Zn(2+)</name>
        <dbReference type="ChEBI" id="CHEBI:29105"/>
        <label>1</label>
    </ligand>
</feature>
<feature type="binding site" evidence="1">
    <location>
        <begin position="15"/>
        <end position="17"/>
    </location>
    <ligand>
        <name>substrate</name>
    </ligand>
</feature>
<feature type="binding site" evidence="1">
    <location>
        <position position="15"/>
    </location>
    <ligand>
        <name>Zn(2+)</name>
        <dbReference type="ChEBI" id="CHEBI:29105"/>
        <label>1</label>
    </ligand>
</feature>
<feature type="binding site" evidence="1">
    <location>
        <position position="41"/>
    </location>
    <ligand>
        <name>substrate</name>
    </ligand>
</feature>
<feature type="binding site" description="via carbamate group" evidence="1">
    <location>
        <position position="97"/>
    </location>
    <ligand>
        <name>Zn(2+)</name>
        <dbReference type="ChEBI" id="CHEBI:29105"/>
        <label>1</label>
    </ligand>
</feature>
<feature type="binding site" description="via carbamate group" evidence="1">
    <location>
        <position position="97"/>
    </location>
    <ligand>
        <name>Zn(2+)</name>
        <dbReference type="ChEBI" id="CHEBI:29105"/>
        <label>2</label>
    </ligand>
</feature>
<feature type="binding site" evidence="1">
    <location>
        <position position="134"/>
    </location>
    <ligand>
        <name>substrate</name>
    </ligand>
</feature>
<feature type="binding site" evidence="1">
    <location>
        <position position="134"/>
    </location>
    <ligand>
        <name>Zn(2+)</name>
        <dbReference type="ChEBI" id="CHEBI:29105"/>
        <label>2</label>
    </ligand>
</feature>
<feature type="binding site" evidence="1">
    <location>
        <position position="172"/>
    </location>
    <ligand>
        <name>Zn(2+)</name>
        <dbReference type="ChEBI" id="CHEBI:29105"/>
        <label>2</label>
    </ligand>
</feature>
<feature type="binding site" evidence="1">
    <location>
        <position position="217"/>
    </location>
    <ligand>
        <name>substrate</name>
    </ligand>
</feature>
<feature type="binding site" evidence="1">
    <location>
        <position position="245"/>
    </location>
    <ligand>
        <name>Zn(2+)</name>
        <dbReference type="ChEBI" id="CHEBI:29105"/>
        <label>1</label>
    </ligand>
</feature>
<feature type="binding site" evidence="1">
    <location>
        <position position="249"/>
    </location>
    <ligand>
        <name>substrate</name>
    </ligand>
</feature>
<feature type="binding site" evidence="1">
    <location>
        <position position="261"/>
    </location>
    <ligand>
        <name>substrate</name>
    </ligand>
</feature>
<feature type="modified residue" description="N6-carboxylysine" evidence="1">
    <location>
        <position position="97"/>
    </location>
</feature>
<proteinExistence type="inferred from homology"/>
<dbReference type="EC" id="3.5.2.3" evidence="1"/>
<dbReference type="EMBL" id="CP000507">
    <property type="protein sequence ID" value="ABM01073.1"/>
    <property type="molecule type" value="Genomic_DNA"/>
</dbReference>
<dbReference type="RefSeq" id="WP_011760978.1">
    <property type="nucleotide sequence ID" value="NC_008700.1"/>
</dbReference>
<dbReference type="SMR" id="A1S9L6"/>
<dbReference type="STRING" id="326297.Sama_2870"/>
<dbReference type="MEROPS" id="M38.A02"/>
<dbReference type="KEGG" id="saz:Sama_2870"/>
<dbReference type="eggNOG" id="COG0418">
    <property type="taxonomic scope" value="Bacteria"/>
</dbReference>
<dbReference type="HOGENOM" id="CLU_041558_1_0_6"/>
<dbReference type="OrthoDB" id="9808095at2"/>
<dbReference type="UniPathway" id="UPA00070">
    <property type="reaction ID" value="UER00117"/>
</dbReference>
<dbReference type="Proteomes" id="UP000009175">
    <property type="component" value="Chromosome"/>
</dbReference>
<dbReference type="GO" id="GO:0005829">
    <property type="term" value="C:cytosol"/>
    <property type="evidence" value="ECO:0007669"/>
    <property type="project" value="TreeGrafter"/>
</dbReference>
<dbReference type="GO" id="GO:0004151">
    <property type="term" value="F:dihydroorotase activity"/>
    <property type="evidence" value="ECO:0007669"/>
    <property type="project" value="UniProtKB-UniRule"/>
</dbReference>
<dbReference type="GO" id="GO:0008270">
    <property type="term" value="F:zinc ion binding"/>
    <property type="evidence" value="ECO:0007669"/>
    <property type="project" value="UniProtKB-UniRule"/>
</dbReference>
<dbReference type="GO" id="GO:0006207">
    <property type="term" value="P:'de novo' pyrimidine nucleobase biosynthetic process"/>
    <property type="evidence" value="ECO:0007669"/>
    <property type="project" value="TreeGrafter"/>
</dbReference>
<dbReference type="GO" id="GO:0044205">
    <property type="term" value="P:'de novo' UMP biosynthetic process"/>
    <property type="evidence" value="ECO:0007669"/>
    <property type="project" value="UniProtKB-UniRule"/>
</dbReference>
<dbReference type="CDD" id="cd01294">
    <property type="entry name" value="DHOase"/>
    <property type="match status" value="1"/>
</dbReference>
<dbReference type="FunFam" id="3.20.20.140:FF:000006">
    <property type="entry name" value="Dihydroorotase"/>
    <property type="match status" value="1"/>
</dbReference>
<dbReference type="Gene3D" id="3.20.20.140">
    <property type="entry name" value="Metal-dependent hydrolases"/>
    <property type="match status" value="1"/>
</dbReference>
<dbReference type="HAMAP" id="MF_00219">
    <property type="entry name" value="PyrC_classII"/>
    <property type="match status" value="1"/>
</dbReference>
<dbReference type="InterPro" id="IPR006680">
    <property type="entry name" value="Amidohydro-rel"/>
</dbReference>
<dbReference type="InterPro" id="IPR004721">
    <property type="entry name" value="DHOdimr"/>
</dbReference>
<dbReference type="InterPro" id="IPR002195">
    <property type="entry name" value="Dihydroorotase_CS"/>
</dbReference>
<dbReference type="InterPro" id="IPR032466">
    <property type="entry name" value="Metal_Hydrolase"/>
</dbReference>
<dbReference type="NCBIfam" id="TIGR00856">
    <property type="entry name" value="pyrC_dimer"/>
    <property type="match status" value="1"/>
</dbReference>
<dbReference type="PANTHER" id="PTHR43137">
    <property type="entry name" value="DIHYDROOROTASE"/>
    <property type="match status" value="1"/>
</dbReference>
<dbReference type="PANTHER" id="PTHR43137:SF1">
    <property type="entry name" value="DIHYDROOROTASE"/>
    <property type="match status" value="1"/>
</dbReference>
<dbReference type="Pfam" id="PF01979">
    <property type="entry name" value="Amidohydro_1"/>
    <property type="match status" value="1"/>
</dbReference>
<dbReference type="PIRSF" id="PIRSF001237">
    <property type="entry name" value="DHOdimr"/>
    <property type="match status" value="1"/>
</dbReference>
<dbReference type="SUPFAM" id="SSF51556">
    <property type="entry name" value="Metallo-dependent hydrolases"/>
    <property type="match status" value="1"/>
</dbReference>
<dbReference type="PROSITE" id="PS00482">
    <property type="entry name" value="DIHYDROOROTASE_1"/>
    <property type="match status" value="1"/>
</dbReference>
<dbReference type="PROSITE" id="PS00483">
    <property type="entry name" value="DIHYDROOROTASE_2"/>
    <property type="match status" value="1"/>
</dbReference>
<comment type="function">
    <text evidence="1">Catalyzes the reversible cyclization of carbamoyl aspartate to dihydroorotate.</text>
</comment>
<comment type="catalytic activity">
    <reaction evidence="1">
        <text>(S)-dihydroorotate + H2O = N-carbamoyl-L-aspartate + H(+)</text>
        <dbReference type="Rhea" id="RHEA:24296"/>
        <dbReference type="ChEBI" id="CHEBI:15377"/>
        <dbReference type="ChEBI" id="CHEBI:15378"/>
        <dbReference type="ChEBI" id="CHEBI:30864"/>
        <dbReference type="ChEBI" id="CHEBI:32814"/>
        <dbReference type="EC" id="3.5.2.3"/>
    </reaction>
</comment>
<comment type="cofactor">
    <cofactor evidence="1">
        <name>Zn(2+)</name>
        <dbReference type="ChEBI" id="CHEBI:29105"/>
    </cofactor>
    <text evidence="1">Binds 2 Zn(2+) ions per subunit.</text>
</comment>
<comment type="pathway">
    <text evidence="1">Pyrimidine metabolism; UMP biosynthesis via de novo pathway; (S)-dihydroorotate from bicarbonate: step 3/3.</text>
</comment>
<comment type="subunit">
    <text evidence="1">Homodimer.</text>
</comment>
<comment type="similarity">
    <text evidence="1">Belongs to the metallo-dependent hydrolases superfamily. DHOase family. Class II DHOase subfamily.</text>
</comment>
<name>PYRC_SHEAM</name>
<reference key="1">
    <citation type="submission" date="2006-12" db="EMBL/GenBank/DDBJ databases">
        <title>Complete sequence of Shewanella amazonensis SB2B.</title>
        <authorList>
            <consortium name="US DOE Joint Genome Institute"/>
            <person name="Copeland A."/>
            <person name="Lucas S."/>
            <person name="Lapidus A."/>
            <person name="Barry K."/>
            <person name="Detter J.C."/>
            <person name="Glavina del Rio T."/>
            <person name="Hammon N."/>
            <person name="Israni S."/>
            <person name="Dalin E."/>
            <person name="Tice H."/>
            <person name="Pitluck S."/>
            <person name="Munk A.C."/>
            <person name="Brettin T."/>
            <person name="Bruce D."/>
            <person name="Han C."/>
            <person name="Tapia R."/>
            <person name="Gilna P."/>
            <person name="Schmutz J."/>
            <person name="Larimer F."/>
            <person name="Land M."/>
            <person name="Hauser L."/>
            <person name="Kyrpides N."/>
            <person name="Mikhailova N."/>
            <person name="Fredrickson J."/>
            <person name="Richardson P."/>
        </authorList>
    </citation>
    <scope>NUCLEOTIDE SEQUENCE [LARGE SCALE GENOMIC DNA]</scope>
    <source>
        <strain>ATCC BAA-1098 / SB2B</strain>
    </source>
</reference>
<evidence type="ECO:0000255" key="1">
    <source>
        <dbReference type="HAMAP-Rule" id="MF_00219"/>
    </source>
</evidence>
<accession>A1S9L6</accession>
<organism>
    <name type="scientific">Shewanella amazonensis (strain ATCC BAA-1098 / SB2B)</name>
    <dbReference type="NCBI Taxonomy" id="326297"/>
    <lineage>
        <taxon>Bacteria</taxon>
        <taxon>Pseudomonadati</taxon>
        <taxon>Pseudomonadota</taxon>
        <taxon>Gammaproteobacteria</taxon>
        <taxon>Alteromonadales</taxon>
        <taxon>Shewanellaceae</taxon>
        <taxon>Shewanella</taxon>
    </lineage>
</organism>
<gene>
    <name evidence="1" type="primary">pyrC</name>
    <name type="ordered locus">Sama_2870</name>
</gene>